<comment type="function">
    <text evidence="1">PPIases accelerate the folding of proteins. They catalyze the cis-trans isomerization of proline imidic peptide bonds in oligopeptides (By similarity).</text>
</comment>
<comment type="catalytic activity">
    <reaction>
        <text>[protein]-peptidylproline (omega=180) = [protein]-peptidylproline (omega=0)</text>
        <dbReference type="Rhea" id="RHEA:16237"/>
        <dbReference type="Rhea" id="RHEA-COMP:10747"/>
        <dbReference type="Rhea" id="RHEA-COMP:10748"/>
        <dbReference type="ChEBI" id="CHEBI:83833"/>
        <dbReference type="ChEBI" id="CHEBI:83834"/>
        <dbReference type="EC" id="5.2.1.8"/>
    </reaction>
</comment>
<comment type="subcellular location">
    <subcellularLocation>
        <location evidence="1">Cytoplasm</location>
    </subcellularLocation>
</comment>
<comment type="developmental stage">
    <text evidence="3">Expressed in late sporogonial stages.</text>
</comment>
<comment type="similarity">
    <text evidence="4">Belongs to the cyclophilin-type PPIase family.</text>
</comment>
<dbReference type="EC" id="5.2.1.8"/>
<dbReference type="EMBL" id="AL590448">
    <property type="protein sequence ID" value="CAD26352.1"/>
    <property type="molecule type" value="Genomic_DNA"/>
</dbReference>
<dbReference type="RefSeq" id="NP_597176.1">
    <property type="nucleotide sequence ID" value="NM_001041785.1"/>
</dbReference>
<dbReference type="PDB" id="3K2C">
    <property type="method" value="X-ray"/>
    <property type="resolution" value="1.95 A"/>
    <property type="chains" value="A/B/C/D=1-172"/>
</dbReference>
<dbReference type="PDBsum" id="3K2C"/>
<dbReference type="SMR" id="Q8SRE1"/>
<dbReference type="FunCoup" id="Q8SRE1">
    <property type="interactions" value="57"/>
</dbReference>
<dbReference type="STRING" id="284813.Q8SRE1"/>
<dbReference type="GeneID" id="859598"/>
<dbReference type="KEGG" id="ecu:ECU08_0470"/>
<dbReference type="VEuPathDB" id="MicrosporidiaDB:ECU08_0470"/>
<dbReference type="HOGENOM" id="CLU_012062_4_3_1"/>
<dbReference type="InParanoid" id="Q8SRE1"/>
<dbReference type="OMA" id="TWLTGKH"/>
<dbReference type="OrthoDB" id="193499at2759"/>
<dbReference type="EvolutionaryTrace" id="Q8SRE1"/>
<dbReference type="Proteomes" id="UP000000819">
    <property type="component" value="Chromosome VIII"/>
</dbReference>
<dbReference type="GO" id="GO:0005737">
    <property type="term" value="C:cytoplasm"/>
    <property type="evidence" value="ECO:0007669"/>
    <property type="project" value="UniProtKB-SubCell"/>
</dbReference>
<dbReference type="GO" id="GO:0016018">
    <property type="term" value="F:cyclosporin A binding"/>
    <property type="evidence" value="ECO:0007669"/>
    <property type="project" value="TreeGrafter"/>
</dbReference>
<dbReference type="GO" id="GO:0003755">
    <property type="term" value="F:peptidyl-prolyl cis-trans isomerase activity"/>
    <property type="evidence" value="ECO:0007669"/>
    <property type="project" value="UniProtKB-KW"/>
</dbReference>
<dbReference type="GO" id="GO:0006457">
    <property type="term" value="P:protein folding"/>
    <property type="evidence" value="ECO:0007669"/>
    <property type="project" value="InterPro"/>
</dbReference>
<dbReference type="CDD" id="cd01926">
    <property type="entry name" value="cyclophilin_ABH_like"/>
    <property type="match status" value="1"/>
</dbReference>
<dbReference type="FunFam" id="2.40.100.10:FF:000013">
    <property type="entry name" value="Peptidyl-prolyl cis-trans isomerase"/>
    <property type="match status" value="1"/>
</dbReference>
<dbReference type="Gene3D" id="2.40.100.10">
    <property type="entry name" value="Cyclophilin-like"/>
    <property type="match status" value="1"/>
</dbReference>
<dbReference type="InterPro" id="IPR029000">
    <property type="entry name" value="Cyclophilin-like_dom_sf"/>
</dbReference>
<dbReference type="InterPro" id="IPR024936">
    <property type="entry name" value="Cyclophilin-type_PPIase"/>
</dbReference>
<dbReference type="InterPro" id="IPR020892">
    <property type="entry name" value="Cyclophilin-type_PPIase_CS"/>
</dbReference>
<dbReference type="InterPro" id="IPR002130">
    <property type="entry name" value="Cyclophilin-type_PPIase_dom"/>
</dbReference>
<dbReference type="PANTHER" id="PTHR11071">
    <property type="entry name" value="PEPTIDYL-PROLYL CIS-TRANS ISOMERASE"/>
    <property type="match status" value="1"/>
</dbReference>
<dbReference type="PANTHER" id="PTHR11071:SF561">
    <property type="entry name" value="PEPTIDYL-PROLYL CIS-TRANS ISOMERASE D-RELATED"/>
    <property type="match status" value="1"/>
</dbReference>
<dbReference type="Pfam" id="PF00160">
    <property type="entry name" value="Pro_isomerase"/>
    <property type="match status" value="1"/>
</dbReference>
<dbReference type="PIRSF" id="PIRSF001467">
    <property type="entry name" value="Peptidylpro_ismrse"/>
    <property type="match status" value="1"/>
</dbReference>
<dbReference type="PRINTS" id="PR00153">
    <property type="entry name" value="CSAPPISMRASE"/>
</dbReference>
<dbReference type="SUPFAM" id="SSF50891">
    <property type="entry name" value="Cyclophilin-like"/>
    <property type="match status" value="1"/>
</dbReference>
<dbReference type="PROSITE" id="PS00170">
    <property type="entry name" value="CSA_PPIASE_1"/>
    <property type="match status" value="1"/>
</dbReference>
<dbReference type="PROSITE" id="PS50072">
    <property type="entry name" value="CSA_PPIASE_2"/>
    <property type="match status" value="1"/>
</dbReference>
<protein>
    <recommendedName>
        <fullName>Peptidyl-prolyl cis-trans isomerase</fullName>
        <shortName>PPIase</shortName>
        <ecNumber>5.2.1.8</ecNumber>
    </recommendedName>
    <alternativeName>
        <fullName>Cyclophilin</fullName>
        <shortName>CPH</shortName>
    </alternativeName>
    <alternativeName>
        <fullName>Rotamase</fullName>
    </alternativeName>
</protein>
<gene>
    <name type="primary">CPR1</name>
    <name type="ordered locus">ECU08_0470</name>
</gene>
<keyword id="KW-0002">3D-structure</keyword>
<keyword id="KW-0963">Cytoplasm</keyword>
<keyword id="KW-0413">Isomerase</keyword>
<keyword id="KW-1185">Reference proteome</keyword>
<keyword id="KW-0697">Rotamase</keyword>
<feature type="chain" id="PRO_0000383096" description="Peptidyl-prolyl cis-trans isomerase">
    <location>
        <begin position="1"/>
        <end position="172"/>
    </location>
</feature>
<feature type="domain" description="PPIase cyclophilin-type" evidence="2">
    <location>
        <begin position="10"/>
        <end position="168"/>
    </location>
</feature>
<feature type="strand" evidence="5">
    <location>
        <begin position="9"/>
        <end position="15"/>
    </location>
</feature>
<feature type="strand" evidence="5">
    <location>
        <begin position="18"/>
        <end position="27"/>
    </location>
</feature>
<feature type="turn" evidence="5">
    <location>
        <begin position="29"/>
        <end position="31"/>
    </location>
</feature>
<feature type="helix" evidence="5">
    <location>
        <begin position="33"/>
        <end position="44"/>
    </location>
</feature>
<feature type="strand" evidence="5">
    <location>
        <begin position="49"/>
        <end position="51"/>
    </location>
</feature>
<feature type="strand" evidence="5">
    <location>
        <begin position="55"/>
        <end position="60"/>
    </location>
</feature>
<feature type="turn" evidence="5">
    <location>
        <begin position="61"/>
        <end position="63"/>
    </location>
</feature>
<feature type="strand" evidence="5">
    <location>
        <begin position="64"/>
        <end position="67"/>
    </location>
</feature>
<feature type="turn" evidence="5">
    <location>
        <begin position="70"/>
        <end position="72"/>
    </location>
</feature>
<feature type="strand" evidence="5">
    <location>
        <begin position="73"/>
        <end position="76"/>
    </location>
</feature>
<feature type="strand" evidence="5">
    <location>
        <begin position="100"/>
        <end position="103"/>
    </location>
</feature>
<feature type="strand" evidence="5">
    <location>
        <begin position="115"/>
        <end position="120"/>
    </location>
</feature>
<feature type="helix" evidence="5">
    <location>
        <begin position="123"/>
        <end position="125"/>
    </location>
</feature>
<feature type="turn" evidence="5">
    <location>
        <begin position="126"/>
        <end position="128"/>
    </location>
</feature>
<feature type="strand" evidence="5">
    <location>
        <begin position="131"/>
        <end position="137"/>
    </location>
</feature>
<feature type="helix" evidence="5">
    <location>
        <begin position="139"/>
        <end position="146"/>
    </location>
</feature>
<feature type="strand" evidence="5">
    <location>
        <begin position="161"/>
        <end position="168"/>
    </location>
</feature>
<proteinExistence type="evidence at protein level"/>
<reference key="1">
    <citation type="journal article" date="2001" name="Nature">
        <title>Genome sequence and gene compaction of the eukaryote parasite Encephalitozoon cuniculi.</title>
        <authorList>
            <person name="Katinka M.D."/>
            <person name="Duprat S."/>
            <person name="Cornillot E."/>
            <person name="Metenier G."/>
            <person name="Thomarat F."/>
            <person name="Prensier G."/>
            <person name="Barbe V."/>
            <person name="Peyretaillade E."/>
            <person name="Brottier P."/>
            <person name="Wincker P."/>
            <person name="Delbac F."/>
            <person name="El Alaoui H."/>
            <person name="Peyret P."/>
            <person name="Saurin W."/>
            <person name="Gouy M."/>
            <person name="Weissenbach J."/>
            <person name="Vivares C.P."/>
        </authorList>
    </citation>
    <scope>NUCLEOTIDE SEQUENCE [LARGE SCALE GENOMIC DNA]</scope>
    <source>
        <strain>GB-M1</strain>
    </source>
</reference>
<reference key="2">
    <citation type="journal article" date="2006" name="Proteomics">
        <title>Proteomic analysis of the eukaryotic parasite Encephalitozoon cuniculi (microsporidia): a reference map for proteins expressed in late sporogonial stages.</title>
        <authorList>
            <person name="Brosson D."/>
            <person name="Kuhn L."/>
            <person name="Delbac F."/>
            <person name="Garin J."/>
            <person name="Vivares C.P."/>
            <person name="Texier C."/>
        </authorList>
    </citation>
    <scope>IDENTIFICATION BY MASS SPECTROMETRY [LARGE SCALE ANALYSIS]</scope>
    <scope>DEVELOPMENTAL STAGE</scope>
</reference>
<reference key="3">
    <citation type="submission" date="2009-10" db="PDB data bank">
        <title>Crystal structure of peptidyl-prolyl cis-trans isomerase from Encephalitozoon cuniculi at 1.9 A resolution.</title>
        <authorList>
            <consortium name="Seattle structural genomics center for infectious disease (SSGCID)"/>
        </authorList>
    </citation>
    <scope>X-RAY CRYSTALLOGRAPHY (1.95 ANGSTROMS)</scope>
</reference>
<organism>
    <name type="scientific">Encephalitozoon cuniculi (strain GB-M1)</name>
    <name type="common">Microsporidian parasite</name>
    <dbReference type="NCBI Taxonomy" id="284813"/>
    <lineage>
        <taxon>Eukaryota</taxon>
        <taxon>Fungi</taxon>
        <taxon>Fungi incertae sedis</taxon>
        <taxon>Microsporidia</taxon>
        <taxon>Unikaryonidae</taxon>
        <taxon>Encephalitozoon</taxon>
    </lineage>
</organism>
<accession>Q8SRE1</accession>
<name>CYPH_ENCCU</name>
<sequence>MAKEASGNVYFDVYANEESLGRIVMKLEDDIVPKTAKNFRTLCERPKGEGYKGSTFHRIIPGFMVQGGDYTAHNGTGGRSIYGEKFPDENFELKHTKEGILSMANCGAHTNGSQFFITLGKTQWLDEKHVVFGEVVEGMDVVHKIAKYGSESGQVKKGYRIEIRDCGVLGSN</sequence>
<evidence type="ECO:0000250" key="1"/>
<evidence type="ECO:0000255" key="2">
    <source>
        <dbReference type="PROSITE-ProRule" id="PRU00156"/>
    </source>
</evidence>
<evidence type="ECO:0000269" key="3">
    <source>
    </source>
</evidence>
<evidence type="ECO:0000305" key="4"/>
<evidence type="ECO:0007829" key="5">
    <source>
        <dbReference type="PDB" id="3K2C"/>
    </source>
</evidence>